<evidence type="ECO:0000250" key="1"/>
<evidence type="ECO:0000250" key="2">
    <source>
        <dbReference type="UniProtKB" id="O00253"/>
    </source>
</evidence>
<evidence type="ECO:0000255" key="3"/>
<evidence type="ECO:0000255" key="4">
    <source>
        <dbReference type="PROSITE-ProRule" id="PRU00494"/>
    </source>
</evidence>
<dbReference type="EMBL" id="AF177762">
    <property type="protein sequence ID" value="AAF13865.2"/>
    <property type="molecule type" value="Genomic_DNA"/>
</dbReference>
<dbReference type="RefSeq" id="NP_001011693.1">
    <property type="nucleotide sequence ID" value="NM_001011693.1"/>
</dbReference>
<dbReference type="RefSeq" id="XP_013853683.1">
    <property type="nucleotide sequence ID" value="XM_013998229.1"/>
</dbReference>
<dbReference type="RefSeq" id="XP_013853684.1">
    <property type="nucleotide sequence ID" value="XM_013998230.1"/>
</dbReference>
<dbReference type="RefSeq" id="XP_020949205.1">
    <property type="nucleotide sequence ID" value="XM_021093546.1"/>
</dbReference>
<dbReference type="SMR" id="Q9TU18"/>
<dbReference type="FunCoup" id="Q9TU18">
    <property type="interactions" value="207"/>
</dbReference>
<dbReference type="STRING" id="9823.ENSSSCP00000002994"/>
<dbReference type="PaxDb" id="9823-ENSSSCP00000002994"/>
<dbReference type="Ensembl" id="ENSSSCT00000003073.4">
    <property type="protein sequence ID" value="ENSSSCP00000002994.1"/>
    <property type="gene ID" value="ENSSSCG00000002775.4"/>
</dbReference>
<dbReference type="Ensembl" id="ENSSSCT00015109310.1">
    <property type="protein sequence ID" value="ENSSSCP00015046454.1"/>
    <property type="gene ID" value="ENSSSCG00015080413.1"/>
</dbReference>
<dbReference type="Ensembl" id="ENSSSCT00025102770.1">
    <property type="protein sequence ID" value="ENSSSCP00025045512.1"/>
    <property type="gene ID" value="ENSSSCG00025074577.1"/>
</dbReference>
<dbReference type="Ensembl" id="ENSSSCT00030027169.1">
    <property type="protein sequence ID" value="ENSSSCP00030012100.1"/>
    <property type="gene ID" value="ENSSSCG00030019682.1"/>
</dbReference>
<dbReference type="Ensembl" id="ENSSSCT00035041982.1">
    <property type="protein sequence ID" value="ENSSSCP00035016785.1"/>
    <property type="gene ID" value="ENSSSCG00035031706.1"/>
</dbReference>
<dbReference type="Ensembl" id="ENSSSCT00040004181.1">
    <property type="protein sequence ID" value="ENSSSCP00040001315.1"/>
    <property type="gene ID" value="ENSSSCG00040003344.1"/>
</dbReference>
<dbReference type="Ensembl" id="ENSSSCT00045041948.1">
    <property type="protein sequence ID" value="ENSSSCP00045029124.1"/>
    <property type="gene ID" value="ENSSSCG00045024624.1"/>
</dbReference>
<dbReference type="Ensembl" id="ENSSSCT00050062839.1">
    <property type="protein sequence ID" value="ENSSSCP00050026978.1"/>
    <property type="gene ID" value="ENSSSCG00050046187.1"/>
</dbReference>
<dbReference type="Ensembl" id="ENSSSCT00055011086.1">
    <property type="protein sequence ID" value="ENSSSCP00055008754.1"/>
    <property type="gene ID" value="ENSSSCG00055005697.1"/>
</dbReference>
<dbReference type="Ensembl" id="ENSSSCT00060069922.1">
    <property type="protein sequence ID" value="ENSSSCP00060030150.1"/>
    <property type="gene ID" value="ENSSSCG00060051379.1"/>
</dbReference>
<dbReference type="Ensembl" id="ENSSSCT00065028988.1">
    <property type="protein sequence ID" value="ENSSSCP00065011837.1"/>
    <property type="gene ID" value="ENSSSCG00065021799.1"/>
</dbReference>
<dbReference type="Ensembl" id="ENSSSCT00070035263.1">
    <property type="protein sequence ID" value="ENSSSCP00070029450.1"/>
    <property type="gene ID" value="ENSSSCG00070017867.1"/>
</dbReference>
<dbReference type="Ensembl" id="ENSSSCT00085026732">
    <property type="protein sequence ID" value="ENSSSCP00085018399"/>
    <property type="gene ID" value="ENSSSCG00085014176"/>
</dbReference>
<dbReference type="Ensembl" id="ENSSSCT00090044409">
    <property type="protein sequence ID" value="ENSSSCP00090027638"/>
    <property type="gene ID" value="ENSSSCG00090025117"/>
</dbReference>
<dbReference type="Ensembl" id="ENSSSCT00105058625">
    <property type="protein sequence ID" value="ENSSSCP00105041316"/>
    <property type="gene ID" value="ENSSSCG00105030922"/>
</dbReference>
<dbReference type="Ensembl" id="ENSSSCT00110066065">
    <property type="protein sequence ID" value="ENSSSCP00110046485"/>
    <property type="gene ID" value="ENSSSCG00110034769"/>
</dbReference>
<dbReference type="Ensembl" id="ENSSSCT00110066861">
    <property type="protein sequence ID" value="ENSSSCP00110047115"/>
    <property type="gene ID" value="ENSSSCG00110035160"/>
</dbReference>
<dbReference type="Ensembl" id="ENSSSCT00115031828">
    <property type="protein sequence ID" value="ENSSSCP00115030260"/>
    <property type="gene ID" value="ENSSSCG00115017968"/>
</dbReference>
<dbReference type="Ensembl" id="ENSSSCT00130003262">
    <property type="protein sequence ID" value="ENSSSCP00130002371"/>
    <property type="gene ID" value="ENSSSCG00130001680"/>
</dbReference>
<dbReference type="GeneID" id="397275"/>
<dbReference type="KEGG" id="ssc:397275"/>
<dbReference type="CTD" id="181"/>
<dbReference type="VGNC" id="VGNC:85189">
    <property type="gene designation" value="AGRP"/>
</dbReference>
<dbReference type="eggNOG" id="ENOG502S7K0">
    <property type="taxonomic scope" value="Eukaryota"/>
</dbReference>
<dbReference type="GeneTree" id="ENSGT00940000154258"/>
<dbReference type="HOGENOM" id="CLU_103790_0_0_1"/>
<dbReference type="InParanoid" id="Q9TU18"/>
<dbReference type="OMA" id="SWAMLQG"/>
<dbReference type="OrthoDB" id="9942042at2759"/>
<dbReference type="TreeFam" id="TF330729"/>
<dbReference type="Proteomes" id="UP000008227">
    <property type="component" value="Chromosome 6"/>
</dbReference>
<dbReference type="Proteomes" id="UP000314985">
    <property type="component" value="Chromosome 6"/>
</dbReference>
<dbReference type="Proteomes" id="UP000694570">
    <property type="component" value="Unplaced"/>
</dbReference>
<dbReference type="Proteomes" id="UP000694571">
    <property type="component" value="Unplaced"/>
</dbReference>
<dbReference type="Proteomes" id="UP000694720">
    <property type="component" value="Unplaced"/>
</dbReference>
<dbReference type="Proteomes" id="UP000694722">
    <property type="component" value="Unplaced"/>
</dbReference>
<dbReference type="Proteomes" id="UP000694723">
    <property type="component" value="Unplaced"/>
</dbReference>
<dbReference type="Proteomes" id="UP000694724">
    <property type="component" value="Unplaced"/>
</dbReference>
<dbReference type="Proteomes" id="UP000694725">
    <property type="component" value="Unplaced"/>
</dbReference>
<dbReference type="Proteomes" id="UP000694726">
    <property type="component" value="Unplaced"/>
</dbReference>
<dbReference type="Proteomes" id="UP000694727">
    <property type="component" value="Unplaced"/>
</dbReference>
<dbReference type="Proteomes" id="UP000694728">
    <property type="component" value="Unplaced"/>
</dbReference>
<dbReference type="Bgee" id="ENSSSCG00000002775">
    <property type="expression patterns" value="Expressed in blood and 4 other cell types or tissues"/>
</dbReference>
<dbReference type="GO" id="GO:0005615">
    <property type="term" value="C:extracellular space"/>
    <property type="evidence" value="ECO:0000250"/>
    <property type="project" value="UniProtKB"/>
</dbReference>
<dbReference type="GO" id="GO:0005796">
    <property type="term" value="C:Golgi lumen"/>
    <property type="evidence" value="ECO:0000250"/>
    <property type="project" value="UniProtKB"/>
</dbReference>
<dbReference type="GO" id="GO:0005184">
    <property type="term" value="F:neuropeptide hormone activity"/>
    <property type="evidence" value="ECO:0000250"/>
    <property type="project" value="UniProtKB"/>
</dbReference>
<dbReference type="GO" id="GO:0070996">
    <property type="term" value="F:type 1 melanocortin receptor binding"/>
    <property type="evidence" value="ECO:0000318"/>
    <property type="project" value="GO_Central"/>
</dbReference>
<dbReference type="GO" id="GO:0031781">
    <property type="term" value="F:type 3 melanocortin receptor binding"/>
    <property type="evidence" value="ECO:0000250"/>
    <property type="project" value="UniProtKB"/>
</dbReference>
<dbReference type="GO" id="GO:0031782">
    <property type="term" value="F:type 4 melanocortin receptor binding"/>
    <property type="evidence" value="ECO:0000250"/>
    <property type="project" value="UniProtKB"/>
</dbReference>
<dbReference type="GO" id="GO:0008343">
    <property type="term" value="P:adult feeding behavior"/>
    <property type="evidence" value="ECO:0000318"/>
    <property type="project" value="GO_Central"/>
</dbReference>
<dbReference type="GO" id="GO:0009755">
    <property type="term" value="P:hormone-mediated signaling pathway"/>
    <property type="evidence" value="ECO:0007669"/>
    <property type="project" value="InterPro"/>
</dbReference>
<dbReference type="GO" id="GO:0007218">
    <property type="term" value="P:neuropeptide signaling pathway"/>
    <property type="evidence" value="ECO:0000250"/>
    <property type="project" value="UniProtKB"/>
</dbReference>
<dbReference type="GO" id="GO:2000253">
    <property type="term" value="P:positive regulation of feeding behavior"/>
    <property type="evidence" value="ECO:0000318"/>
    <property type="project" value="GO_Central"/>
</dbReference>
<dbReference type="GO" id="GO:0060259">
    <property type="term" value="P:regulation of feeding behavior"/>
    <property type="evidence" value="ECO:0000250"/>
    <property type="project" value="UniProtKB"/>
</dbReference>
<dbReference type="FunFam" id="4.10.760.10:FF:000001">
    <property type="entry name" value="Agouti-related protein"/>
    <property type="match status" value="1"/>
</dbReference>
<dbReference type="Gene3D" id="4.10.760.10">
    <property type="entry name" value="Agouti domain"/>
    <property type="match status" value="1"/>
</dbReference>
<dbReference type="InterPro" id="IPR007733">
    <property type="entry name" value="Agouti"/>
</dbReference>
<dbReference type="InterPro" id="IPR027300">
    <property type="entry name" value="Agouti_dom"/>
</dbReference>
<dbReference type="InterPro" id="IPR036836">
    <property type="entry name" value="Agouti_dom_sf"/>
</dbReference>
<dbReference type="PANTHER" id="PTHR16551">
    <property type="entry name" value="AGOUTI RELATED"/>
    <property type="match status" value="1"/>
</dbReference>
<dbReference type="PANTHER" id="PTHR16551:SF4">
    <property type="entry name" value="AGOUTI-RELATED PROTEIN"/>
    <property type="match status" value="1"/>
</dbReference>
<dbReference type="Pfam" id="PF05039">
    <property type="entry name" value="Agouti"/>
    <property type="match status" value="1"/>
</dbReference>
<dbReference type="SMART" id="SM00792">
    <property type="entry name" value="Agouti"/>
    <property type="match status" value="1"/>
</dbReference>
<dbReference type="SUPFAM" id="SSF57055">
    <property type="entry name" value="Agouti-related protein"/>
    <property type="match status" value="1"/>
</dbReference>
<dbReference type="PROSITE" id="PS60024">
    <property type="entry name" value="AGOUTI_1"/>
    <property type="match status" value="1"/>
</dbReference>
<dbReference type="PROSITE" id="PS51150">
    <property type="entry name" value="AGOUTI_2"/>
    <property type="match status" value="1"/>
</dbReference>
<comment type="function">
    <text evidence="1">Plays a role in weight homeostasis. Involved in the control of feeding behavior through the central melanocortin system. Acts as alpha melanocyte-stimulating hormone antagonist by inhibiting cAMP production mediated by stimulation of melanocortin receptors within the hypothalamus and adrenal gland. Has very low activity with MC5R. Is an inverse agonist for MC3R and MC4R being able to suppress their constitutive activity. It promotes MC3R and MC4R endocytosis in an arrestin-dependent manner.</text>
</comment>
<comment type="subunit">
    <text evidence="2">Interacts with melanocortin receptors MC3R, MC4R and MC5R.</text>
</comment>
<comment type="subcellular location">
    <subcellularLocation>
        <location evidence="2">Secreted</location>
    </subcellularLocation>
    <subcellularLocation>
        <location evidence="2">Golgi apparatus lumen</location>
    </subcellularLocation>
</comment>
<comment type="domain">
    <text evidence="2">The presence of a 'disulfide through disulfide knot' structurally defines this protein as a knottin.</text>
</comment>
<proteinExistence type="inferred from homology"/>
<accession>Q9TU18</accession>
<keyword id="KW-1015">Disulfide bond</keyword>
<keyword id="KW-0333">Golgi apparatus</keyword>
<keyword id="KW-0960">Knottin</keyword>
<keyword id="KW-1185">Reference proteome</keyword>
<keyword id="KW-0964">Secreted</keyword>
<keyword id="KW-0732">Signal</keyword>
<gene>
    <name type="primary">AGRP</name>
</gene>
<organism>
    <name type="scientific">Sus scrofa</name>
    <name type="common">Pig</name>
    <dbReference type="NCBI Taxonomy" id="9823"/>
    <lineage>
        <taxon>Eukaryota</taxon>
        <taxon>Metazoa</taxon>
        <taxon>Chordata</taxon>
        <taxon>Craniata</taxon>
        <taxon>Vertebrata</taxon>
        <taxon>Euteleostomi</taxon>
        <taxon>Mammalia</taxon>
        <taxon>Eutheria</taxon>
        <taxon>Laurasiatheria</taxon>
        <taxon>Artiodactyla</taxon>
        <taxon>Suina</taxon>
        <taxon>Suidae</taxon>
        <taxon>Sus</taxon>
    </lineage>
</organism>
<feature type="signal peptide" evidence="3">
    <location>
        <begin position="1"/>
        <end position="20"/>
    </location>
</feature>
<feature type="propeptide" id="PRO_0000434046" evidence="2">
    <location>
        <begin position="21"/>
        <end position="84"/>
    </location>
</feature>
<feature type="chain" id="PRO_0000001036" description="Agouti-related protein">
    <location>
        <begin position="85"/>
        <end position="134"/>
    </location>
</feature>
<feature type="domain" description="Agouti" evidence="4">
    <location>
        <begin position="89"/>
        <end position="131"/>
    </location>
</feature>
<feature type="region of interest" description="Interaction with melanocortin receptors" evidence="1">
    <location>
        <begin position="113"/>
        <end position="115"/>
    </location>
</feature>
<feature type="site" description="Cleavage; by PCSK1" evidence="2">
    <location>
        <begin position="84"/>
        <end position="85"/>
    </location>
</feature>
<feature type="disulfide bond" evidence="2 4">
    <location>
        <begin position="89"/>
        <end position="104"/>
    </location>
</feature>
<feature type="disulfide bond" evidence="2 4">
    <location>
        <begin position="96"/>
        <end position="110"/>
    </location>
</feature>
<feature type="disulfide bond" evidence="2 4">
    <location>
        <begin position="103"/>
        <end position="121"/>
    </location>
</feature>
<feature type="disulfide bond" evidence="2 4">
    <location>
        <begin position="107"/>
        <end position="131"/>
    </location>
</feature>
<feature type="disulfide bond" evidence="2 4">
    <location>
        <begin position="112"/>
        <end position="119"/>
    </location>
</feature>
<reference key="1">
    <citation type="journal article" date="2002" name="J. Anim. Sci.">
        <title>Sequencing of the porcine agouti-related protein (AGRP) gene.</title>
        <authorList>
            <person name="Halverson M.J."/>
            <person name="Donelan K.J."/>
            <person name="Granholm N.H."/>
            <person name="Cheesbrough T.M."/>
            <person name="Westby C.A."/>
            <person name="Marshall D.M."/>
        </authorList>
    </citation>
    <scope>NUCLEOTIDE SEQUENCE [GENOMIC DNA]</scope>
</reference>
<protein>
    <recommendedName>
        <fullName>Agouti-related protein</fullName>
    </recommendedName>
</protein>
<sequence length="134" mass="14681">MLTTMLLSCALLLAMPTMLGAQIGLAPLEGIGRLDQALFPELQDLGLQPPLKRTTAERAEEALLQQAEAKALAEVLDPEGRKARSPRRCVRLHESCLGHQVPCCDPCATCYCRFFNAFCYCRKLGTATNPCSRT</sequence>
<name>AGRP_PIG</name>